<name>FADJ_ECOUT</name>
<accession>Q1R972</accession>
<evidence type="ECO:0000255" key="1">
    <source>
        <dbReference type="HAMAP-Rule" id="MF_01617"/>
    </source>
</evidence>
<dbReference type="EC" id="4.2.1.17" evidence="1"/>
<dbReference type="EC" id="5.1.2.3" evidence="1"/>
<dbReference type="EC" id="1.1.1.35" evidence="1"/>
<dbReference type="EMBL" id="CP000243">
    <property type="protein sequence ID" value="ABE08092.1"/>
    <property type="molecule type" value="Genomic_DNA"/>
</dbReference>
<dbReference type="RefSeq" id="WP_000425008.1">
    <property type="nucleotide sequence ID" value="NZ_CP064825.1"/>
</dbReference>
<dbReference type="SMR" id="Q1R972"/>
<dbReference type="KEGG" id="eci:UTI89_C2625"/>
<dbReference type="HOGENOM" id="CLU_009834_16_1_6"/>
<dbReference type="UniPathway" id="UPA00659"/>
<dbReference type="Proteomes" id="UP000001952">
    <property type="component" value="Chromosome"/>
</dbReference>
<dbReference type="GO" id="GO:0005737">
    <property type="term" value="C:cytoplasm"/>
    <property type="evidence" value="ECO:0007669"/>
    <property type="project" value="UniProtKB-SubCell"/>
</dbReference>
<dbReference type="GO" id="GO:0008692">
    <property type="term" value="F:3-hydroxybutyryl-CoA epimerase activity"/>
    <property type="evidence" value="ECO:0007669"/>
    <property type="project" value="UniProtKB-UniRule"/>
</dbReference>
<dbReference type="GO" id="GO:0004300">
    <property type="term" value="F:enoyl-CoA hydratase activity"/>
    <property type="evidence" value="ECO:0007669"/>
    <property type="project" value="UniProtKB-UniRule"/>
</dbReference>
<dbReference type="GO" id="GO:0016509">
    <property type="term" value="F:long-chain-3-hydroxyacyl-CoA dehydrogenase activity"/>
    <property type="evidence" value="ECO:0007669"/>
    <property type="project" value="TreeGrafter"/>
</dbReference>
<dbReference type="GO" id="GO:0070403">
    <property type="term" value="F:NAD+ binding"/>
    <property type="evidence" value="ECO:0007669"/>
    <property type="project" value="InterPro"/>
</dbReference>
<dbReference type="GO" id="GO:0006635">
    <property type="term" value="P:fatty acid beta-oxidation"/>
    <property type="evidence" value="ECO:0007669"/>
    <property type="project" value="UniProtKB-UniRule"/>
</dbReference>
<dbReference type="CDD" id="cd06558">
    <property type="entry name" value="crotonase-like"/>
    <property type="match status" value="1"/>
</dbReference>
<dbReference type="FunFam" id="1.10.1040.50:FF:000003">
    <property type="entry name" value="Fatty acid oxidation complex subunit alpha"/>
    <property type="match status" value="1"/>
</dbReference>
<dbReference type="FunFam" id="3.90.226.10:FF:000011">
    <property type="entry name" value="Fatty acid oxidation complex subunit alpha"/>
    <property type="match status" value="1"/>
</dbReference>
<dbReference type="FunFam" id="3.40.50.720:FF:000009">
    <property type="entry name" value="Fatty oxidation complex, alpha subunit"/>
    <property type="match status" value="1"/>
</dbReference>
<dbReference type="Gene3D" id="1.10.1040.50">
    <property type="match status" value="1"/>
</dbReference>
<dbReference type="Gene3D" id="3.90.226.10">
    <property type="entry name" value="2-enoyl-CoA Hydratase, Chain A, domain 1"/>
    <property type="match status" value="1"/>
</dbReference>
<dbReference type="Gene3D" id="3.40.50.720">
    <property type="entry name" value="NAD(P)-binding Rossmann-like Domain"/>
    <property type="match status" value="1"/>
</dbReference>
<dbReference type="HAMAP" id="MF_01617">
    <property type="entry name" value="FadJ"/>
    <property type="match status" value="1"/>
</dbReference>
<dbReference type="InterPro" id="IPR006180">
    <property type="entry name" value="3-OHacyl-CoA_DH_CS"/>
</dbReference>
<dbReference type="InterPro" id="IPR006176">
    <property type="entry name" value="3-OHacyl-CoA_DH_NAD-bd"/>
</dbReference>
<dbReference type="InterPro" id="IPR006108">
    <property type="entry name" value="3HC_DH_C"/>
</dbReference>
<dbReference type="InterPro" id="IPR008927">
    <property type="entry name" value="6-PGluconate_DH-like_C_sf"/>
</dbReference>
<dbReference type="InterPro" id="IPR029045">
    <property type="entry name" value="ClpP/crotonase-like_dom_sf"/>
</dbReference>
<dbReference type="InterPro" id="IPR001753">
    <property type="entry name" value="Enoyl-CoA_hydra/iso"/>
</dbReference>
<dbReference type="InterPro" id="IPR050136">
    <property type="entry name" value="FA_oxidation_alpha_subunit"/>
</dbReference>
<dbReference type="InterPro" id="IPR012802">
    <property type="entry name" value="FadJ"/>
</dbReference>
<dbReference type="InterPro" id="IPR036291">
    <property type="entry name" value="NAD(P)-bd_dom_sf"/>
</dbReference>
<dbReference type="NCBIfam" id="TIGR02440">
    <property type="entry name" value="FadJ"/>
    <property type="match status" value="1"/>
</dbReference>
<dbReference type="NCBIfam" id="NF008363">
    <property type="entry name" value="PRK11154.1"/>
    <property type="match status" value="1"/>
</dbReference>
<dbReference type="PANTHER" id="PTHR43612">
    <property type="entry name" value="TRIFUNCTIONAL ENZYME SUBUNIT ALPHA"/>
    <property type="match status" value="1"/>
</dbReference>
<dbReference type="PANTHER" id="PTHR43612:SF3">
    <property type="entry name" value="TRIFUNCTIONAL ENZYME SUBUNIT ALPHA, MITOCHONDRIAL"/>
    <property type="match status" value="1"/>
</dbReference>
<dbReference type="Pfam" id="PF00725">
    <property type="entry name" value="3HCDH"/>
    <property type="match status" value="2"/>
</dbReference>
<dbReference type="Pfam" id="PF02737">
    <property type="entry name" value="3HCDH_N"/>
    <property type="match status" value="1"/>
</dbReference>
<dbReference type="Pfam" id="PF00378">
    <property type="entry name" value="ECH_1"/>
    <property type="match status" value="1"/>
</dbReference>
<dbReference type="SUPFAM" id="SSF48179">
    <property type="entry name" value="6-phosphogluconate dehydrogenase C-terminal domain-like"/>
    <property type="match status" value="2"/>
</dbReference>
<dbReference type="SUPFAM" id="SSF52096">
    <property type="entry name" value="ClpP/crotonase"/>
    <property type="match status" value="1"/>
</dbReference>
<dbReference type="SUPFAM" id="SSF51735">
    <property type="entry name" value="NAD(P)-binding Rossmann-fold domains"/>
    <property type="match status" value="1"/>
</dbReference>
<dbReference type="PROSITE" id="PS00067">
    <property type="entry name" value="3HCDH"/>
    <property type="match status" value="1"/>
</dbReference>
<keyword id="KW-0963">Cytoplasm</keyword>
<keyword id="KW-0276">Fatty acid metabolism</keyword>
<keyword id="KW-0413">Isomerase</keyword>
<keyword id="KW-0442">Lipid degradation</keyword>
<keyword id="KW-0443">Lipid metabolism</keyword>
<keyword id="KW-0456">Lyase</keyword>
<keyword id="KW-0511">Multifunctional enzyme</keyword>
<keyword id="KW-0520">NAD</keyword>
<keyword id="KW-0560">Oxidoreductase</keyword>
<sequence>MEMASAFTLNVRLDNIAIITIDVPGEKMNTLKAEFASQVRAIIKQIRENKELRGVVFVSAKPDNFIAGADINMIGNCKTAQEAEVLARQGQQLMAEIHALPIPVIAAIHGACLGGGLELALACHGRVCTDDPKTVLGLPEVQLGLLPGSGGTQRLPRLIGVSTALEMILTGKQLRAKQAVKLGLVDDVVPHSILLEAAVELAKQDRPSSRPLPVRERILAGPLGRALLFKMVGKKTEHKTQGNYPATERILEVVETGLAQGTSSGYDAEARAFGELAMTPQSQALRNIFFASTDVKKDPGSDAPPAPLNSVGILGGGLMGGGIAYVTACKAGLPVRIKDINPRGINHALKYSWDQLEGKVRRRHLKASERDKQLALISGTTDYCGFAHRDLIIEAVFENLELKQQMVAEVEQNCATHTIFASNTSSLPIGDIAAHAARPEQVIGLHFFSPVEKMPLVEIIPHASTSAQTIATTVKLAKKQGKTPIVVRDKAGFYVNRILAPYINEAIRMLTEGERIEHIDAALVKFGFPVGPIQLLDEVGIDTGTKIMPVLEAAYGERFSAPANVVSSILNDDRKGRKNGRGFYLYGQKGRKSKKQVDPAIYPLIGAQGQGRLSAPQVAERCVMLMLNEAVRCLDEQVIRSVRDGDIGAVFGIGFPPFLGGPFRYIDSLGAGEVVAIMQRLATQYGSRFTPCDRLVEMSERGESFWKTTATDLQ</sequence>
<comment type="function">
    <text evidence="1">Catalyzes the formation of a hydroxyacyl-CoA by addition of water on enoyl-CoA. Also exhibits 3-hydroxyacyl-CoA epimerase and 3-hydroxyacyl-CoA dehydrogenase activities.</text>
</comment>
<comment type="catalytic activity">
    <reaction evidence="1">
        <text>a (3S)-3-hydroxyacyl-CoA = a (2E)-enoyl-CoA + H2O</text>
        <dbReference type="Rhea" id="RHEA:16105"/>
        <dbReference type="ChEBI" id="CHEBI:15377"/>
        <dbReference type="ChEBI" id="CHEBI:57318"/>
        <dbReference type="ChEBI" id="CHEBI:58856"/>
        <dbReference type="EC" id="4.2.1.17"/>
    </reaction>
</comment>
<comment type="catalytic activity">
    <reaction evidence="1">
        <text>a 4-saturated-(3S)-3-hydroxyacyl-CoA = a (3E)-enoyl-CoA + H2O</text>
        <dbReference type="Rhea" id="RHEA:20724"/>
        <dbReference type="ChEBI" id="CHEBI:15377"/>
        <dbReference type="ChEBI" id="CHEBI:58521"/>
        <dbReference type="ChEBI" id="CHEBI:137480"/>
        <dbReference type="EC" id="4.2.1.17"/>
    </reaction>
</comment>
<comment type="catalytic activity">
    <reaction evidence="1">
        <text>a (3S)-3-hydroxyacyl-CoA + NAD(+) = a 3-oxoacyl-CoA + NADH + H(+)</text>
        <dbReference type="Rhea" id="RHEA:22432"/>
        <dbReference type="ChEBI" id="CHEBI:15378"/>
        <dbReference type="ChEBI" id="CHEBI:57318"/>
        <dbReference type="ChEBI" id="CHEBI:57540"/>
        <dbReference type="ChEBI" id="CHEBI:57945"/>
        <dbReference type="ChEBI" id="CHEBI:90726"/>
        <dbReference type="EC" id="1.1.1.35"/>
    </reaction>
</comment>
<comment type="catalytic activity">
    <reaction evidence="1">
        <text>(3S)-3-hydroxybutanoyl-CoA = (3R)-3-hydroxybutanoyl-CoA</text>
        <dbReference type="Rhea" id="RHEA:21760"/>
        <dbReference type="ChEBI" id="CHEBI:57315"/>
        <dbReference type="ChEBI" id="CHEBI:57316"/>
        <dbReference type="EC" id="5.1.2.3"/>
    </reaction>
</comment>
<comment type="pathway">
    <text evidence="1">Lipid metabolism; fatty acid beta-oxidation.</text>
</comment>
<comment type="subunit">
    <text evidence="1">Heterotetramer of two alpha chains (FadJ) and two beta chains (FadI).</text>
</comment>
<comment type="subcellular location">
    <subcellularLocation>
        <location evidence="1">Cytoplasm</location>
    </subcellularLocation>
</comment>
<comment type="similarity">
    <text evidence="1">In the N-terminal section; belongs to the enoyl-CoA hydratase/isomerase family.</text>
</comment>
<comment type="similarity">
    <text evidence="1">In the central section; belongs to the 3-hydroxyacyl-CoA dehydrogenase family.</text>
</comment>
<protein>
    <recommendedName>
        <fullName evidence="1">Fatty acid oxidation complex subunit alpha</fullName>
    </recommendedName>
    <domain>
        <recommendedName>
            <fullName evidence="1">Enoyl-CoA hydratase/3-hydroxybutyryl-CoA epimerase</fullName>
            <ecNumber evidence="1">4.2.1.17</ecNumber>
            <ecNumber evidence="1">5.1.2.3</ecNumber>
        </recommendedName>
    </domain>
    <domain>
        <recommendedName>
            <fullName evidence="1">3-hydroxyacyl-CoA dehydrogenase</fullName>
            <ecNumber evidence="1">1.1.1.35</ecNumber>
        </recommendedName>
    </domain>
</protein>
<feature type="chain" id="PRO_0000273982" description="Fatty acid oxidation complex subunit alpha">
    <location>
        <begin position="1"/>
        <end position="714"/>
    </location>
</feature>
<feature type="region of interest" description="Enoyl-CoA hydratase" evidence="1">
    <location>
        <begin position="1"/>
        <end position="190"/>
    </location>
</feature>
<feature type="region of interest" description="3-hydroxyacyl-CoA dehydrogenase" evidence="1">
    <location>
        <begin position="306"/>
        <end position="714"/>
    </location>
</feature>
<feature type="site" description="Important for catalytic activity" evidence="1">
    <location>
        <position position="118"/>
    </location>
</feature>
<feature type="site" description="Important for catalytic activity" evidence="1">
    <location>
        <position position="140"/>
    </location>
</feature>
<organism>
    <name type="scientific">Escherichia coli (strain UTI89 / UPEC)</name>
    <dbReference type="NCBI Taxonomy" id="364106"/>
    <lineage>
        <taxon>Bacteria</taxon>
        <taxon>Pseudomonadati</taxon>
        <taxon>Pseudomonadota</taxon>
        <taxon>Gammaproteobacteria</taxon>
        <taxon>Enterobacterales</taxon>
        <taxon>Enterobacteriaceae</taxon>
        <taxon>Escherichia</taxon>
    </lineage>
</organism>
<gene>
    <name evidence="1" type="primary">fadJ</name>
    <name type="ordered locus">UTI89_C2625</name>
</gene>
<reference key="1">
    <citation type="journal article" date="2006" name="Proc. Natl. Acad. Sci. U.S.A.">
        <title>Identification of genes subject to positive selection in uropathogenic strains of Escherichia coli: a comparative genomics approach.</title>
        <authorList>
            <person name="Chen S.L."/>
            <person name="Hung C.-S."/>
            <person name="Xu J."/>
            <person name="Reigstad C.S."/>
            <person name="Magrini V."/>
            <person name="Sabo A."/>
            <person name="Blasiar D."/>
            <person name="Bieri T."/>
            <person name="Meyer R.R."/>
            <person name="Ozersky P."/>
            <person name="Armstrong J.R."/>
            <person name="Fulton R.S."/>
            <person name="Latreille J.P."/>
            <person name="Spieth J."/>
            <person name="Hooton T.M."/>
            <person name="Mardis E.R."/>
            <person name="Hultgren S.J."/>
            <person name="Gordon J.I."/>
        </authorList>
    </citation>
    <scope>NUCLEOTIDE SEQUENCE [LARGE SCALE GENOMIC DNA]</scope>
    <source>
        <strain>UTI89 / UPEC</strain>
    </source>
</reference>
<proteinExistence type="inferred from homology"/>